<organism>
    <name type="scientific">Bacillus pumilus (strain SAFR-032)</name>
    <dbReference type="NCBI Taxonomy" id="315750"/>
    <lineage>
        <taxon>Bacteria</taxon>
        <taxon>Bacillati</taxon>
        <taxon>Bacillota</taxon>
        <taxon>Bacilli</taxon>
        <taxon>Bacillales</taxon>
        <taxon>Bacillaceae</taxon>
        <taxon>Bacillus</taxon>
    </lineage>
</organism>
<name>RECU_BACP2</name>
<feature type="chain" id="PRO_1000057847" description="Holliday junction resolvase RecU">
    <location>
        <begin position="1"/>
        <end position="205"/>
    </location>
</feature>
<feature type="region of interest" description="Disordered" evidence="2">
    <location>
        <begin position="1"/>
        <end position="26"/>
    </location>
</feature>
<feature type="binding site" evidence="1">
    <location>
        <position position="86"/>
    </location>
    <ligand>
        <name>Mg(2+)</name>
        <dbReference type="ChEBI" id="CHEBI:18420"/>
    </ligand>
</feature>
<feature type="binding site" evidence="1">
    <location>
        <position position="88"/>
    </location>
    <ligand>
        <name>Mg(2+)</name>
        <dbReference type="ChEBI" id="CHEBI:18420"/>
    </ligand>
</feature>
<feature type="binding site" evidence="1">
    <location>
        <position position="101"/>
    </location>
    <ligand>
        <name>Mg(2+)</name>
        <dbReference type="ChEBI" id="CHEBI:18420"/>
    </ligand>
</feature>
<feature type="binding site" evidence="1">
    <location>
        <position position="120"/>
    </location>
    <ligand>
        <name>Mg(2+)</name>
        <dbReference type="ChEBI" id="CHEBI:18420"/>
    </ligand>
</feature>
<feature type="site" description="Transition state stabilizer" evidence="1">
    <location>
        <position position="103"/>
    </location>
</feature>
<gene>
    <name evidence="1" type="primary">recU</name>
    <name type="ordered locus">BPUM_1963</name>
</gene>
<reference key="1">
    <citation type="journal article" date="2007" name="PLoS ONE">
        <title>Paradoxical DNA repair and peroxide resistance gene conservation in Bacillus pumilus SAFR-032.</title>
        <authorList>
            <person name="Gioia J."/>
            <person name="Yerrapragada S."/>
            <person name="Qin X."/>
            <person name="Jiang H."/>
            <person name="Igboeli O.C."/>
            <person name="Muzny D."/>
            <person name="Dugan-Rocha S."/>
            <person name="Ding Y."/>
            <person name="Hawes A."/>
            <person name="Liu W."/>
            <person name="Perez L."/>
            <person name="Kovar C."/>
            <person name="Dinh H."/>
            <person name="Lee S."/>
            <person name="Nazareth L."/>
            <person name="Blyth P."/>
            <person name="Holder M."/>
            <person name="Buhay C."/>
            <person name="Tirumalai M.R."/>
            <person name="Liu Y."/>
            <person name="Dasgupta I."/>
            <person name="Bokhetache L."/>
            <person name="Fujita M."/>
            <person name="Karouia F."/>
            <person name="Eswara Moorthy P."/>
            <person name="Siefert J."/>
            <person name="Uzman A."/>
            <person name="Buzumbo P."/>
            <person name="Verma A."/>
            <person name="Zwiya H."/>
            <person name="McWilliams B.D."/>
            <person name="Olowu A."/>
            <person name="Clinkenbeard K.D."/>
            <person name="Newcombe D."/>
            <person name="Golebiewski L."/>
            <person name="Petrosino J.F."/>
            <person name="Nicholson W.L."/>
            <person name="Fox G.E."/>
            <person name="Venkateswaran K."/>
            <person name="Highlander S.K."/>
            <person name="Weinstock G.M."/>
        </authorList>
    </citation>
    <scope>NUCLEOTIDE SEQUENCE [LARGE SCALE GENOMIC DNA]</scope>
    <source>
        <strain>SAFR-032</strain>
    </source>
</reference>
<sequence length="205" mass="23636">MIRYPNGKSYQPIQPIGTKKRISGESSYSNRGMTLEADLNETNQYYLVNGIAVIHKKPTPVQIVNVDYPKRSAAVIKEAYFKQSSTTDYNGVYRGRYIDFEAKETKSTTSFPLKNFHEHQIEHMKQVEKQGGICFVIISAFGSVYYLPASDLFFFWERQKLNGRKSISKDELMEAGHLMTLGYSPRIDYIKVVETLHFSDESEYQ</sequence>
<comment type="function">
    <text evidence="1">Endonuclease that resolves Holliday junction intermediates in genetic recombination. Cleaves mobile four-strand junctions by introducing symmetrical nicks in paired strands. Promotes annealing of linear ssDNA with homologous dsDNA. Required for DNA repair, homologous recombination and chromosome segregation.</text>
</comment>
<comment type="catalytic activity">
    <reaction evidence="1">
        <text>Endonucleolytic cleavage at a junction such as a reciprocal single-stranded crossover between two homologous DNA duplexes (Holliday junction).</text>
        <dbReference type="EC" id="3.1.21.10"/>
    </reaction>
</comment>
<comment type="cofactor">
    <cofactor evidence="1">
        <name>Mg(2+)</name>
        <dbReference type="ChEBI" id="CHEBI:18420"/>
    </cofactor>
    <text evidence="1">Binds 1 Mg(2+) ion per subunit.</text>
</comment>
<comment type="subcellular location">
    <subcellularLocation>
        <location evidence="1">Cytoplasm</location>
    </subcellularLocation>
</comment>
<comment type="similarity">
    <text evidence="1">Belongs to the RecU family.</text>
</comment>
<keyword id="KW-0963">Cytoplasm</keyword>
<keyword id="KW-0227">DNA damage</keyword>
<keyword id="KW-0233">DNA recombination</keyword>
<keyword id="KW-0234">DNA repair</keyword>
<keyword id="KW-0255">Endonuclease</keyword>
<keyword id="KW-0378">Hydrolase</keyword>
<keyword id="KW-0460">Magnesium</keyword>
<keyword id="KW-0479">Metal-binding</keyword>
<keyword id="KW-0540">Nuclease</keyword>
<protein>
    <recommendedName>
        <fullName evidence="1">Holliday junction resolvase RecU</fullName>
        <ecNumber evidence="1">3.1.21.10</ecNumber>
    </recommendedName>
    <alternativeName>
        <fullName evidence="1">Recombination protein U homolog</fullName>
    </alternativeName>
</protein>
<proteinExistence type="inferred from homology"/>
<accession>A8FEG6</accession>
<dbReference type="EC" id="3.1.21.10" evidence="1"/>
<dbReference type="EMBL" id="CP000813">
    <property type="protein sequence ID" value="ABV62633.1"/>
    <property type="molecule type" value="Genomic_DNA"/>
</dbReference>
<dbReference type="RefSeq" id="WP_012010348.1">
    <property type="nucleotide sequence ID" value="NZ_VEIS01000015.1"/>
</dbReference>
<dbReference type="SMR" id="A8FEG6"/>
<dbReference type="STRING" id="315750.BPUM_1963"/>
<dbReference type="GeneID" id="23399417"/>
<dbReference type="KEGG" id="bpu:BPUM_1963"/>
<dbReference type="eggNOG" id="COG3331">
    <property type="taxonomic scope" value="Bacteria"/>
</dbReference>
<dbReference type="HOGENOM" id="CLU_096340_0_0_9"/>
<dbReference type="OrthoDB" id="9783592at2"/>
<dbReference type="Proteomes" id="UP000001355">
    <property type="component" value="Chromosome"/>
</dbReference>
<dbReference type="GO" id="GO:0005737">
    <property type="term" value="C:cytoplasm"/>
    <property type="evidence" value="ECO:0007669"/>
    <property type="project" value="UniProtKB-SubCell"/>
</dbReference>
<dbReference type="GO" id="GO:0004519">
    <property type="term" value="F:endonuclease activity"/>
    <property type="evidence" value="ECO:0007669"/>
    <property type="project" value="UniProtKB-UniRule"/>
</dbReference>
<dbReference type="GO" id="GO:0000287">
    <property type="term" value="F:magnesium ion binding"/>
    <property type="evidence" value="ECO:0007669"/>
    <property type="project" value="UniProtKB-UniRule"/>
</dbReference>
<dbReference type="GO" id="GO:0003676">
    <property type="term" value="F:nucleic acid binding"/>
    <property type="evidence" value="ECO:0007669"/>
    <property type="project" value="InterPro"/>
</dbReference>
<dbReference type="GO" id="GO:0007059">
    <property type="term" value="P:chromosome segregation"/>
    <property type="evidence" value="ECO:0007669"/>
    <property type="project" value="UniProtKB-UniRule"/>
</dbReference>
<dbReference type="GO" id="GO:0006310">
    <property type="term" value="P:DNA recombination"/>
    <property type="evidence" value="ECO:0007669"/>
    <property type="project" value="UniProtKB-UniRule"/>
</dbReference>
<dbReference type="GO" id="GO:0006281">
    <property type="term" value="P:DNA repair"/>
    <property type="evidence" value="ECO:0007669"/>
    <property type="project" value="UniProtKB-UniRule"/>
</dbReference>
<dbReference type="CDD" id="cd22354">
    <property type="entry name" value="RecU-like"/>
    <property type="match status" value="1"/>
</dbReference>
<dbReference type="Gene3D" id="3.40.1350.10">
    <property type="match status" value="1"/>
</dbReference>
<dbReference type="HAMAP" id="MF_00130">
    <property type="entry name" value="RecU"/>
    <property type="match status" value="1"/>
</dbReference>
<dbReference type="InterPro" id="IPR004612">
    <property type="entry name" value="Resolv_RecU"/>
</dbReference>
<dbReference type="InterPro" id="IPR011335">
    <property type="entry name" value="Restrct_endonuc-II-like"/>
</dbReference>
<dbReference type="InterPro" id="IPR011856">
    <property type="entry name" value="tRNA_endonuc-like_dom_sf"/>
</dbReference>
<dbReference type="NCBIfam" id="NF002584">
    <property type="entry name" value="PRK02234.1-5"/>
    <property type="match status" value="1"/>
</dbReference>
<dbReference type="NCBIfam" id="TIGR00648">
    <property type="entry name" value="recU"/>
    <property type="match status" value="1"/>
</dbReference>
<dbReference type="Pfam" id="PF03838">
    <property type="entry name" value="RecU"/>
    <property type="match status" value="1"/>
</dbReference>
<dbReference type="PIRSF" id="PIRSF037785">
    <property type="entry name" value="RecU"/>
    <property type="match status" value="1"/>
</dbReference>
<dbReference type="SUPFAM" id="SSF52980">
    <property type="entry name" value="Restriction endonuclease-like"/>
    <property type="match status" value="1"/>
</dbReference>
<evidence type="ECO:0000255" key="1">
    <source>
        <dbReference type="HAMAP-Rule" id="MF_00130"/>
    </source>
</evidence>
<evidence type="ECO:0000256" key="2">
    <source>
        <dbReference type="SAM" id="MobiDB-lite"/>
    </source>
</evidence>